<sequence length="353" mass="38193">MIPNITQLKTAALVMLFAGQALSGPVESRQASESIDAKFKAHGKKYLGNIADQGTLNGNPKTPAIIKANFGQLSPENSMKWDATEPSQGQFSFAGSDYFVEFAETNGKLIRGHTLVWHSQLPSWVSSITDKTTLTDVMKNHITTVMKQYKGKLYAWDVVNEIFEEDGTLRDSVFSRVLGEDFVRIAFETAREADPEAKLYINDYNLDSATSAKLQGMVSHVKKWIAAGVPIDGIGSQTHLGAGAGAAASGALNALASAGTEEVAVTELDIAGATSTDYVDVVNACLDQPKCVGITVWGVADPDSWRADESPLLFDASYNPKEAYNVSQLLSRQHAFDLYLKLGNLLLSRLHSD</sequence>
<keyword id="KW-0119">Carbohydrate metabolism</keyword>
<keyword id="KW-0903">Direct protein sequencing</keyword>
<keyword id="KW-0326">Glycosidase</keyword>
<keyword id="KW-0378">Hydrolase</keyword>
<keyword id="KW-0624">Polysaccharide degradation</keyword>
<keyword id="KW-0964">Secreted</keyword>
<keyword id="KW-0732">Signal</keyword>
<keyword id="KW-0858">Xylan degradation</keyword>
<feature type="signal peptide" evidence="2">
    <location>
        <begin position="1"/>
        <end position="23"/>
    </location>
</feature>
<feature type="chain" id="PRO_0000007975" description="Endo-1,4-beta-xylanase">
    <location>
        <begin position="24"/>
        <end position="353"/>
    </location>
</feature>
<feature type="domain" description="GH10" evidence="3">
    <location>
        <begin position="50"/>
        <end position="330"/>
    </location>
</feature>
<feature type="active site" description="Proton donor" evidence="1">
    <location>
        <position position="161"/>
    </location>
</feature>
<feature type="active site" description="Nucleophile" evidence="4">
    <location>
        <position position="267"/>
    </location>
</feature>
<feature type="sequence conflict" description="In Ref. 2; AA sequence." evidence="5" ref="2">
    <original>L</original>
    <variation>F</variation>
    <location>
        <position position="153"/>
    </location>
</feature>
<feature type="sequence conflict" description="In Ref. 2; AA sequence." evidence="5" ref="2">
    <original>E</original>
    <variation>S</variation>
    <location>
        <position position="180"/>
    </location>
</feature>
<accession>P29417</accession>
<reference key="1">
    <citation type="journal article" date="1993" name="Gene">
        <title>Cloning and structural organization of a xylanase-encoding gene from Penicillium chrysogenum.</title>
        <authorList>
            <person name="Haas H."/>
            <person name="Friedlin E."/>
            <person name="Stoeffler G."/>
            <person name="Redl B."/>
        </authorList>
    </citation>
    <scope>NUCLEOTIDE SEQUENCE [GENOMIC DNA]</scope>
    <source>
        <strain>ATCC 10002 / CBS 277.47 / NBRC 4626 / Wis. Q-176</strain>
    </source>
</reference>
<reference key="2">
    <citation type="journal article" date="1992" name="Biochim. Biophys. Acta">
        <title>Purification, characterization and partial amino acid sequences of a xylanase produced by Penicillium chrysogenum.</title>
        <authorList>
            <person name="Haas H."/>
            <person name="Herfurth E."/>
            <person name="Stoeffler G."/>
            <person name="Redl B."/>
        </authorList>
    </citation>
    <scope>PROTEIN SEQUENCE OF 61-107; 109-123; 140-146; 153-180; 199-212 AND 228-237</scope>
    <scope>CHARACTERIZATION</scope>
    <source>
        <strain>ATCC 10002 / CBS 277.47 / NBRC 4626 / Wis. Q-176</strain>
    </source>
</reference>
<protein>
    <recommendedName>
        <fullName>Endo-1,4-beta-xylanase</fullName>
        <shortName>Xylanase</shortName>
        <ecNumber>3.2.1.8</ecNumber>
    </recommendedName>
    <alternativeName>
        <fullName>1,4-beta-D-xylan xylanohydrolase</fullName>
    </alternativeName>
</protein>
<dbReference type="EC" id="3.2.1.8"/>
<dbReference type="EMBL" id="M98458">
    <property type="protein sequence ID" value="AAA16427.1"/>
    <property type="molecule type" value="Genomic_DNA"/>
</dbReference>
<dbReference type="PIR" id="JN0575">
    <property type="entry name" value="JN0575"/>
</dbReference>
<dbReference type="SMR" id="P29417"/>
<dbReference type="CAZy" id="GH10">
    <property type="family name" value="Glycoside Hydrolase Family 10"/>
</dbReference>
<dbReference type="UniPathway" id="UPA00114"/>
<dbReference type="GO" id="GO:0005576">
    <property type="term" value="C:extracellular region"/>
    <property type="evidence" value="ECO:0007669"/>
    <property type="project" value="UniProtKB-SubCell"/>
</dbReference>
<dbReference type="GO" id="GO:0031176">
    <property type="term" value="F:endo-1,4-beta-xylanase activity"/>
    <property type="evidence" value="ECO:0007669"/>
    <property type="project" value="UniProtKB-EC"/>
</dbReference>
<dbReference type="GO" id="GO:0045493">
    <property type="term" value="P:xylan catabolic process"/>
    <property type="evidence" value="ECO:0007669"/>
    <property type="project" value="UniProtKB-UniPathway"/>
</dbReference>
<dbReference type="FunFam" id="3.20.20.80:FF:000094">
    <property type="entry name" value="Endo-1,4-beta-xylanase"/>
    <property type="match status" value="1"/>
</dbReference>
<dbReference type="Gene3D" id="3.20.20.80">
    <property type="entry name" value="Glycosidases"/>
    <property type="match status" value="1"/>
</dbReference>
<dbReference type="InterPro" id="IPR044846">
    <property type="entry name" value="GH10"/>
</dbReference>
<dbReference type="InterPro" id="IPR031158">
    <property type="entry name" value="GH10_AS"/>
</dbReference>
<dbReference type="InterPro" id="IPR001000">
    <property type="entry name" value="GH10_dom"/>
</dbReference>
<dbReference type="InterPro" id="IPR017853">
    <property type="entry name" value="Glycoside_hydrolase_SF"/>
</dbReference>
<dbReference type="PANTHER" id="PTHR31490:SF76">
    <property type="entry name" value="ENDO-1,4-BETA-XYLANASE C"/>
    <property type="match status" value="1"/>
</dbReference>
<dbReference type="PANTHER" id="PTHR31490">
    <property type="entry name" value="GLYCOSYL HYDROLASE"/>
    <property type="match status" value="1"/>
</dbReference>
<dbReference type="Pfam" id="PF00331">
    <property type="entry name" value="Glyco_hydro_10"/>
    <property type="match status" value="1"/>
</dbReference>
<dbReference type="PRINTS" id="PR00134">
    <property type="entry name" value="GLHYDRLASE10"/>
</dbReference>
<dbReference type="SMART" id="SM00633">
    <property type="entry name" value="Glyco_10"/>
    <property type="match status" value="1"/>
</dbReference>
<dbReference type="SUPFAM" id="SSF51445">
    <property type="entry name" value="(Trans)glycosidases"/>
    <property type="match status" value="1"/>
</dbReference>
<dbReference type="PROSITE" id="PS00591">
    <property type="entry name" value="GH10_1"/>
    <property type="match status" value="1"/>
</dbReference>
<dbReference type="PROSITE" id="PS51760">
    <property type="entry name" value="GH10_2"/>
    <property type="match status" value="1"/>
</dbReference>
<evidence type="ECO:0000250" key="1"/>
<evidence type="ECO:0000255" key="2"/>
<evidence type="ECO:0000255" key="3">
    <source>
        <dbReference type="PROSITE-ProRule" id="PRU01096"/>
    </source>
</evidence>
<evidence type="ECO:0000255" key="4">
    <source>
        <dbReference type="PROSITE-ProRule" id="PRU10061"/>
    </source>
</evidence>
<evidence type="ECO:0000305" key="5"/>
<name>XYNA_PENCH</name>
<organism>
    <name type="scientific">Penicillium chrysogenum</name>
    <name type="common">Penicillium notatum</name>
    <dbReference type="NCBI Taxonomy" id="5076"/>
    <lineage>
        <taxon>Eukaryota</taxon>
        <taxon>Fungi</taxon>
        <taxon>Dikarya</taxon>
        <taxon>Ascomycota</taxon>
        <taxon>Pezizomycotina</taxon>
        <taxon>Eurotiomycetes</taxon>
        <taxon>Eurotiomycetidae</taxon>
        <taxon>Eurotiales</taxon>
        <taxon>Aspergillaceae</taxon>
        <taxon>Penicillium</taxon>
        <taxon>Penicillium chrysogenum species complex</taxon>
    </lineage>
</organism>
<gene>
    <name type="primary">XYLP</name>
</gene>
<proteinExistence type="evidence at protein level"/>
<comment type="function">
    <text>Hydrolyzes oat spelt and birchwood xylan randomly, yielding xylose and xylobiose as major end products.</text>
</comment>
<comment type="catalytic activity">
    <reaction>
        <text>Endohydrolysis of (1-&gt;4)-beta-D-xylosidic linkages in xylans.</text>
        <dbReference type="EC" id="3.2.1.8"/>
    </reaction>
</comment>
<comment type="pathway">
    <text>Glycan degradation; xylan degradation.</text>
</comment>
<comment type="subunit">
    <text>Monomer.</text>
</comment>
<comment type="subcellular location">
    <subcellularLocation>
        <location>Secreted</location>
    </subcellularLocation>
</comment>
<comment type="PTM">
    <text>The N-terminus is blocked.</text>
</comment>
<comment type="similarity">
    <text evidence="5">Belongs to the glycosyl hydrolase 10 (cellulase F) family.</text>
</comment>